<protein>
    <recommendedName>
        <fullName>Preprotein translocase subunit SecG</fullName>
    </recommendedName>
    <alternativeName>
        <fullName>Protein transport protein Sec61 subunit beta homolog</fullName>
    </alternativeName>
</protein>
<comment type="function">
    <text evidence="1">Involved in protein export. The function of the beta subunit is unknown, but it may be involved in stabilization of the trimeric complex (By similarity).</text>
</comment>
<comment type="subunit">
    <text evidence="1">Component of the protein translocase complex. Heterotrimer consisting of alpha (SecY), beta (SecG) and gamma (SecE) subunits. Can form oligomers of the heterotrimer (By similarity).</text>
</comment>
<comment type="subcellular location">
    <subcellularLocation>
        <location evidence="1">Cell membrane</location>
        <topology evidence="1">Single-pass membrane protein</topology>
    </subcellularLocation>
</comment>
<comment type="similarity">
    <text evidence="2">Belongs to the SEC61-beta family.</text>
</comment>
<name>SECG_SULTO</name>
<gene>
    <name type="primary">secG</name>
    <name type="ordered locus">STK_03105</name>
    <name type="ORF">STS041</name>
</gene>
<keyword id="KW-1003">Cell membrane</keyword>
<keyword id="KW-0472">Membrane</keyword>
<keyword id="KW-0653">Protein transport</keyword>
<keyword id="KW-1185">Reference proteome</keyword>
<keyword id="KW-0811">Translocation</keyword>
<keyword id="KW-0812">Transmembrane</keyword>
<keyword id="KW-1133">Transmembrane helix</keyword>
<keyword id="KW-0813">Transport</keyword>
<reference key="1">
    <citation type="journal article" date="2001" name="DNA Res.">
        <title>Complete genome sequence of an aerobic thermoacidophilic Crenarchaeon, Sulfolobus tokodaii strain7.</title>
        <authorList>
            <person name="Kawarabayasi Y."/>
            <person name="Hino Y."/>
            <person name="Horikawa H."/>
            <person name="Jin-no K."/>
            <person name="Takahashi M."/>
            <person name="Sekine M."/>
            <person name="Baba S."/>
            <person name="Ankai A."/>
            <person name="Kosugi H."/>
            <person name="Hosoyama A."/>
            <person name="Fukui S."/>
            <person name="Nagai Y."/>
            <person name="Nishijima K."/>
            <person name="Otsuka R."/>
            <person name="Nakazawa H."/>
            <person name="Takamiya M."/>
            <person name="Kato Y."/>
            <person name="Yoshizawa T."/>
            <person name="Tanaka T."/>
            <person name="Kudoh Y."/>
            <person name="Yamazaki J."/>
            <person name="Kushida N."/>
            <person name="Oguchi A."/>
            <person name="Aoki K."/>
            <person name="Masuda S."/>
            <person name="Yanagii M."/>
            <person name="Nishimura M."/>
            <person name="Yamagishi A."/>
            <person name="Oshima T."/>
            <person name="Kikuchi H."/>
        </authorList>
    </citation>
    <scope>NUCLEOTIDE SEQUENCE [LARGE SCALE GENOMIC DNA]</scope>
    <source>
        <strain>DSM 16993 / JCM 10545 / NBRC 100140 / 7</strain>
    </source>
</reference>
<evidence type="ECO:0000250" key="1"/>
<evidence type="ECO:0000305" key="2"/>
<sequence length="58" mass="6363">MPSSKKKKETVPLASMAGLIRYYEEENEKIKISPKLLIIISIIMVAGVIVASILIPPP</sequence>
<feature type="chain" id="PRO_0000157280" description="Preprotein translocase subunit SecG">
    <location>
        <begin position="1"/>
        <end position="58"/>
    </location>
</feature>
<feature type="topological domain" description="Cytoplasmic" evidence="1">
    <location>
        <begin position="1"/>
        <end position="33"/>
    </location>
</feature>
<feature type="transmembrane region" description="Helical" evidence="1">
    <location>
        <begin position="34"/>
        <end position="53"/>
    </location>
</feature>
<feature type="topological domain" description="Extracellular" evidence="1">
    <location>
        <begin position="54"/>
        <end position="58"/>
    </location>
</feature>
<accession>Q975W7</accession>
<dbReference type="EMBL" id="BA000023">
    <property type="protein sequence ID" value="BAB65281.1"/>
    <property type="molecule type" value="Genomic_DNA"/>
</dbReference>
<dbReference type="RefSeq" id="WP_010978264.1">
    <property type="nucleotide sequence ID" value="NC_003106.2"/>
</dbReference>
<dbReference type="SMR" id="Q975W7"/>
<dbReference type="STRING" id="273063.STK_03105"/>
<dbReference type="KEGG" id="sto:STK_03105"/>
<dbReference type="PATRIC" id="fig|273063.9.peg.362"/>
<dbReference type="eggNOG" id="arCOG02957">
    <property type="taxonomic scope" value="Archaea"/>
</dbReference>
<dbReference type="Proteomes" id="UP000001015">
    <property type="component" value="Chromosome"/>
</dbReference>
<dbReference type="GO" id="GO:0005886">
    <property type="term" value="C:plasma membrane"/>
    <property type="evidence" value="ECO:0007669"/>
    <property type="project" value="UniProtKB-SubCell"/>
</dbReference>
<dbReference type="GO" id="GO:0015031">
    <property type="term" value="P:protein transport"/>
    <property type="evidence" value="ECO:0007669"/>
    <property type="project" value="UniProtKB-UniRule"/>
</dbReference>
<dbReference type="HAMAP" id="MF_00751">
    <property type="entry name" value="SecG"/>
    <property type="match status" value="1"/>
</dbReference>
<dbReference type="InterPro" id="IPR023531">
    <property type="entry name" value="Preprot_translocase_SecG"/>
</dbReference>
<dbReference type="InterPro" id="IPR016482">
    <property type="entry name" value="SecG/Sec61-beta/Sbh"/>
</dbReference>
<dbReference type="NCBIfam" id="NF002318">
    <property type="entry name" value="PRK01253.1"/>
    <property type="match status" value="1"/>
</dbReference>
<dbReference type="Pfam" id="PF03911">
    <property type="entry name" value="Sec61_beta"/>
    <property type="match status" value="1"/>
</dbReference>
<proteinExistence type="inferred from homology"/>
<organism>
    <name type="scientific">Sulfurisphaera tokodaii (strain DSM 16993 / JCM 10545 / NBRC 100140 / 7)</name>
    <name type="common">Sulfolobus tokodaii</name>
    <dbReference type="NCBI Taxonomy" id="273063"/>
    <lineage>
        <taxon>Archaea</taxon>
        <taxon>Thermoproteota</taxon>
        <taxon>Thermoprotei</taxon>
        <taxon>Sulfolobales</taxon>
        <taxon>Sulfolobaceae</taxon>
        <taxon>Sulfurisphaera</taxon>
    </lineage>
</organism>